<protein>
    <recommendedName>
        <fullName evidence="1">A-type ATP synthase subunit C</fullName>
    </recommendedName>
</protein>
<sequence>MRLLEKLWGQKPSRKSDKKKNGTSNYPYAVTRVRAMKSKLLPKESYPRLLNMGIDGITRFIQESEYKNDVNELAMKYSGGDLAEHALNRNLALTYDKLVRITGGELNYLVVAYLKRYDIWNIKTLLRGKIYNASAEDIMESLIAAGEFTYTSMSELAAKATYKEIIEALKYSEYYPLLQKFDGTNLAYIENELDKMYYTGLFGAIGKPRSKDRKLFLKVVRLEVDVKNLINLFRLKKAGVMQLDEIMPLMIEGGLELKPEKLATLPYDEFVNELQRTQYWDVISGVTSSDMTSLTTLESRLTRYYLESSTVLSHVSPISVAPILDYIIHKHNEATNLRIIFRGKETGLSDELIKDQLVVI</sequence>
<feature type="chain" id="PRO_1000048369" description="A-type ATP synthase subunit C">
    <location>
        <begin position="1"/>
        <end position="360"/>
    </location>
</feature>
<feature type="region of interest" description="Disordered" evidence="2">
    <location>
        <begin position="1"/>
        <end position="25"/>
    </location>
</feature>
<organism>
    <name type="scientific">Methanosarcina barkeri (strain Fusaro / DSM 804)</name>
    <dbReference type="NCBI Taxonomy" id="269797"/>
    <lineage>
        <taxon>Archaea</taxon>
        <taxon>Methanobacteriati</taxon>
        <taxon>Methanobacteriota</taxon>
        <taxon>Stenosarchaea group</taxon>
        <taxon>Methanomicrobia</taxon>
        <taxon>Methanosarcinales</taxon>
        <taxon>Methanosarcinaceae</taxon>
        <taxon>Methanosarcina</taxon>
    </lineage>
</organism>
<evidence type="ECO:0000255" key="1">
    <source>
        <dbReference type="HAMAP-Rule" id="MF_00314"/>
    </source>
</evidence>
<evidence type="ECO:0000256" key="2">
    <source>
        <dbReference type="SAM" id="MobiDB-lite"/>
    </source>
</evidence>
<gene>
    <name evidence="1" type="primary">atpC</name>
    <name type="ordered locus">Mbar_A0388</name>
</gene>
<name>AATC_METBF</name>
<keyword id="KW-0066">ATP synthesis</keyword>
<keyword id="KW-1003">Cell membrane</keyword>
<keyword id="KW-0375">Hydrogen ion transport</keyword>
<keyword id="KW-0406">Ion transport</keyword>
<keyword id="KW-0472">Membrane</keyword>
<keyword id="KW-0813">Transport</keyword>
<proteinExistence type="inferred from homology"/>
<reference key="1">
    <citation type="journal article" date="2006" name="J. Bacteriol.">
        <title>The Methanosarcina barkeri genome: comparative analysis with Methanosarcina acetivorans and Methanosarcina mazei reveals extensive rearrangement within methanosarcinal genomes.</title>
        <authorList>
            <person name="Maeder D.L."/>
            <person name="Anderson I."/>
            <person name="Brettin T.S."/>
            <person name="Bruce D.C."/>
            <person name="Gilna P."/>
            <person name="Han C.S."/>
            <person name="Lapidus A."/>
            <person name="Metcalf W.W."/>
            <person name="Saunders E."/>
            <person name="Tapia R."/>
            <person name="Sowers K.R."/>
        </authorList>
    </citation>
    <scope>NUCLEOTIDE SEQUENCE [LARGE SCALE GENOMIC DNA]</scope>
    <source>
        <strain>Fusaro / DSM 804</strain>
    </source>
</reference>
<accession>Q46FH1</accession>
<dbReference type="EMBL" id="CP000099">
    <property type="protein sequence ID" value="AAZ69371.1"/>
    <property type="molecule type" value="Genomic_DNA"/>
</dbReference>
<dbReference type="SMR" id="Q46FH1"/>
<dbReference type="STRING" id="269797.Mbar_A0388"/>
<dbReference type="PaxDb" id="269797-Mbar_A0388"/>
<dbReference type="KEGG" id="mba:Mbar_A0388"/>
<dbReference type="eggNOG" id="arCOG02459">
    <property type="taxonomic scope" value="Archaea"/>
</dbReference>
<dbReference type="HOGENOM" id="CLU_059311_0_1_2"/>
<dbReference type="OrthoDB" id="4272at2157"/>
<dbReference type="GO" id="GO:0005886">
    <property type="term" value="C:plasma membrane"/>
    <property type="evidence" value="ECO:0007669"/>
    <property type="project" value="UniProtKB-SubCell"/>
</dbReference>
<dbReference type="GO" id="GO:0033179">
    <property type="term" value="C:proton-transporting V-type ATPase, V0 domain"/>
    <property type="evidence" value="ECO:0007669"/>
    <property type="project" value="InterPro"/>
</dbReference>
<dbReference type="GO" id="GO:0005524">
    <property type="term" value="F:ATP binding"/>
    <property type="evidence" value="ECO:0007669"/>
    <property type="project" value="UniProtKB-UniRule"/>
</dbReference>
<dbReference type="GO" id="GO:0046933">
    <property type="term" value="F:proton-transporting ATP synthase activity, rotational mechanism"/>
    <property type="evidence" value="ECO:0007669"/>
    <property type="project" value="UniProtKB-UniRule"/>
</dbReference>
<dbReference type="GO" id="GO:0046961">
    <property type="term" value="F:proton-transporting ATPase activity, rotational mechanism"/>
    <property type="evidence" value="ECO:0007669"/>
    <property type="project" value="InterPro"/>
</dbReference>
<dbReference type="GO" id="GO:0042777">
    <property type="term" value="P:proton motive force-driven plasma membrane ATP synthesis"/>
    <property type="evidence" value="ECO:0007669"/>
    <property type="project" value="UniProtKB-UniRule"/>
</dbReference>
<dbReference type="Gene3D" id="1.10.132.50">
    <property type="entry name" value="ATP synthase (C/AC39) subunit, domain 3"/>
    <property type="match status" value="1"/>
</dbReference>
<dbReference type="Gene3D" id="1.20.1690.10">
    <property type="entry name" value="V-type ATP synthase subunit C domain"/>
    <property type="match status" value="2"/>
</dbReference>
<dbReference type="HAMAP" id="MF_00314">
    <property type="entry name" value="ATP_synth_C_arch"/>
    <property type="match status" value="1"/>
</dbReference>
<dbReference type="InterPro" id="IPR036079">
    <property type="entry name" value="ATPase_csu/dsu_sf"/>
</dbReference>
<dbReference type="InterPro" id="IPR014272">
    <property type="entry name" value="ATPase_V0-cplx_csu"/>
</dbReference>
<dbReference type="InterPro" id="IPR002843">
    <property type="entry name" value="ATPase_V0-cplx_csu/dsu"/>
</dbReference>
<dbReference type="InterPro" id="IPR050873">
    <property type="entry name" value="V-ATPase_V0D/AC39_subunit"/>
</dbReference>
<dbReference type="InterPro" id="IPR035067">
    <property type="entry name" value="V-type_ATPase_csu/dsu"/>
</dbReference>
<dbReference type="InterPro" id="IPR044911">
    <property type="entry name" value="V-type_ATPase_csu/dsu_dom_3"/>
</dbReference>
<dbReference type="NCBIfam" id="TIGR02923">
    <property type="entry name" value="AhaC"/>
    <property type="match status" value="1"/>
</dbReference>
<dbReference type="NCBIfam" id="NF002268">
    <property type="entry name" value="PRK01198.1-4"/>
    <property type="match status" value="1"/>
</dbReference>
<dbReference type="PANTHER" id="PTHR38682">
    <property type="entry name" value="V-TYPE ATP SYNTHASE SUBUNIT C"/>
    <property type="match status" value="1"/>
</dbReference>
<dbReference type="PANTHER" id="PTHR38682:SF1">
    <property type="entry name" value="V-TYPE ATP SYNTHASE SUBUNIT C"/>
    <property type="match status" value="1"/>
</dbReference>
<dbReference type="Pfam" id="PF01992">
    <property type="entry name" value="vATP-synt_AC39"/>
    <property type="match status" value="1"/>
</dbReference>
<dbReference type="SUPFAM" id="SSF103486">
    <property type="entry name" value="V-type ATP synthase subunit C"/>
    <property type="match status" value="1"/>
</dbReference>
<comment type="function">
    <text evidence="1">Component of the A-type ATP synthase that produces ATP from ADP in the presence of a proton gradient across the membrane.</text>
</comment>
<comment type="subunit">
    <text evidence="1">Has multiple subunits with at least A(3), B(3), C, D, E, F, H, I and proteolipid K(x).</text>
</comment>
<comment type="subcellular location">
    <subcellularLocation>
        <location evidence="1">Cell membrane</location>
        <topology evidence="1">Peripheral membrane protein</topology>
    </subcellularLocation>
</comment>
<comment type="similarity">
    <text evidence="1">Belongs to the V-ATPase V0D/AC39 subunit family.</text>
</comment>